<proteinExistence type="inferred from homology"/>
<name>Y4618_BURO0</name>
<gene>
    <name type="ordered locus">Bcenmc03_4618</name>
</gene>
<dbReference type="EMBL" id="CP000959">
    <property type="protein sequence ID" value="ACA93756.1"/>
    <property type="molecule type" value="Genomic_DNA"/>
</dbReference>
<dbReference type="RefSeq" id="WP_012339127.1">
    <property type="nucleotide sequence ID" value="NC_010515.1"/>
</dbReference>
<dbReference type="SMR" id="B1K2U6"/>
<dbReference type="GeneID" id="83051347"/>
<dbReference type="KEGG" id="bcm:Bcenmc03_4618"/>
<dbReference type="HOGENOM" id="CLU_057831_0_0_4"/>
<dbReference type="Proteomes" id="UP000002169">
    <property type="component" value="Chromosome 2"/>
</dbReference>
<dbReference type="Gene3D" id="1.10.10.10">
    <property type="entry name" value="Winged helix-like DNA-binding domain superfamily/Winged helix DNA-binding domain"/>
    <property type="match status" value="2"/>
</dbReference>
<dbReference type="HAMAP" id="MF_01584">
    <property type="entry name" value="UPF0502"/>
    <property type="match status" value="1"/>
</dbReference>
<dbReference type="InterPro" id="IPR007432">
    <property type="entry name" value="DUF480"/>
</dbReference>
<dbReference type="InterPro" id="IPR036388">
    <property type="entry name" value="WH-like_DNA-bd_sf"/>
</dbReference>
<dbReference type="InterPro" id="IPR036390">
    <property type="entry name" value="WH_DNA-bd_sf"/>
</dbReference>
<dbReference type="PANTHER" id="PTHR38768">
    <property type="entry name" value="UPF0502 PROTEIN YCEH"/>
    <property type="match status" value="1"/>
</dbReference>
<dbReference type="PANTHER" id="PTHR38768:SF1">
    <property type="entry name" value="UPF0502 PROTEIN YCEH"/>
    <property type="match status" value="1"/>
</dbReference>
<dbReference type="Pfam" id="PF04337">
    <property type="entry name" value="DUF480"/>
    <property type="match status" value="1"/>
</dbReference>
<dbReference type="SUPFAM" id="SSF46785">
    <property type="entry name" value="Winged helix' DNA-binding domain"/>
    <property type="match status" value="2"/>
</dbReference>
<comment type="similarity">
    <text evidence="1">Belongs to the UPF0502 family.</text>
</comment>
<feature type="chain" id="PRO_1000201233" description="UPF0502 protein Bcenmc03_4618">
    <location>
        <begin position="1"/>
        <end position="236"/>
    </location>
</feature>
<sequence length="236" mass="25453">MNTTPDTPTPRALRELTPLEARILGVLVEKQHTVPDTYPLSLNALTAGCNQKTARSPVMNVSEDEVTTALDELKRLSLVMEGSSSRVPRFEHNMNRVLGIPSQAIALLTILLLRGPQTAAELRLNSARLHGFADISSVEAFLDELAARAQPLVVRLPRAPGARENRWMHLMCGEVNMADFASADAGGGADSVPPSEFEALKAEQKRLADEVARLNALVQRMASELGIDVDAPGDAS</sequence>
<protein>
    <recommendedName>
        <fullName evidence="1">UPF0502 protein Bcenmc03_4618</fullName>
    </recommendedName>
</protein>
<organism>
    <name type="scientific">Burkholderia orbicola (strain MC0-3)</name>
    <dbReference type="NCBI Taxonomy" id="406425"/>
    <lineage>
        <taxon>Bacteria</taxon>
        <taxon>Pseudomonadati</taxon>
        <taxon>Pseudomonadota</taxon>
        <taxon>Betaproteobacteria</taxon>
        <taxon>Burkholderiales</taxon>
        <taxon>Burkholderiaceae</taxon>
        <taxon>Burkholderia</taxon>
        <taxon>Burkholderia cepacia complex</taxon>
        <taxon>Burkholderia orbicola</taxon>
    </lineage>
</organism>
<evidence type="ECO:0000255" key="1">
    <source>
        <dbReference type="HAMAP-Rule" id="MF_01584"/>
    </source>
</evidence>
<reference key="1">
    <citation type="submission" date="2008-02" db="EMBL/GenBank/DDBJ databases">
        <title>Complete sequence of chromosome 2 of Burkholderia cenocepacia MC0-3.</title>
        <authorList>
            <person name="Copeland A."/>
            <person name="Lucas S."/>
            <person name="Lapidus A."/>
            <person name="Barry K."/>
            <person name="Bruce D."/>
            <person name="Goodwin L."/>
            <person name="Glavina del Rio T."/>
            <person name="Dalin E."/>
            <person name="Tice H."/>
            <person name="Pitluck S."/>
            <person name="Chain P."/>
            <person name="Malfatti S."/>
            <person name="Shin M."/>
            <person name="Vergez L."/>
            <person name="Schmutz J."/>
            <person name="Larimer F."/>
            <person name="Land M."/>
            <person name="Hauser L."/>
            <person name="Kyrpides N."/>
            <person name="Mikhailova N."/>
            <person name="Tiedje J."/>
            <person name="Richardson P."/>
        </authorList>
    </citation>
    <scope>NUCLEOTIDE SEQUENCE [LARGE SCALE GENOMIC DNA]</scope>
    <source>
        <strain>MC0-3</strain>
    </source>
</reference>
<accession>B1K2U6</accession>